<name>RNH_LACP7</name>
<feature type="chain" id="PRO_0000332582" description="Ribonuclease H">
    <location>
        <begin position="1"/>
        <end position="158"/>
    </location>
</feature>
<feature type="domain" description="RNase H type-1" evidence="2">
    <location>
        <begin position="1"/>
        <end position="147"/>
    </location>
</feature>
<feature type="binding site" evidence="1">
    <location>
        <position position="8"/>
    </location>
    <ligand>
        <name>Mg(2+)</name>
        <dbReference type="ChEBI" id="CHEBI:18420"/>
        <label>1</label>
    </ligand>
</feature>
<feature type="binding site" evidence="1">
    <location>
        <position position="8"/>
    </location>
    <ligand>
        <name>Mg(2+)</name>
        <dbReference type="ChEBI" id="CHEBI:18420"/>
        <label>2</label>
    </ligand>
</feature>
<feature type="binding site" evidence="1">
    <location>
        <position position="52"/>
    </location>
    <ligand>
        <name>Mg(2+)</name>
        <dbReference type="ChEBI" id="CHEBI:18420"/>
        <label>1</label>
    </ligand>
</feature>
<feature type="binding site" evidence="1">
    <location>
        <position position="74"/>
    </location>
    <ligand>
        <name>Mg(2+)</name>
        <dbReference type="ChEBI" id="CHEBI:18420"/>
        <label>1</label>
    </ligand>
</feature>
<feature type="binding site" evidence="1">
    <location>
        <position position="139"/>
    </location>
    <ligand>
        <name>Mg(2+)</name>
        <dbReference type="ChEBI" id="CHEBI:18420"/>
        <label>2</label>
    </ligand>
</feature>
<sequence>MKVTIYTDGAARGNPDGPGGYGTILSYIDSTGVEHIREYSGGYKKTTNNRMELMAAIVGLEALTKPCVVTLYSDSQYVVKAFNEHWLDGWIKKGWKRGKNEPVKNVDLWKRLLAAKNQHDVTFCWVKGHDGHPQNERCDVLATTAADGGNLADDNVVE</sequence>
<proteinExistence type="inferred from homology"/>
<dbReference type="EC" id="3.1.26.4" evidence="1"/>
<dbReference type="EMBL" id="CP000885">
    <property type="protein sequence ID" value="ABX42743.1"/>
    <property type="molecule type" value="Genomic_DNA"/>
</dbReference>
<dbReference type="RefSeq" id="WP_012200397.1">
    <property type="nucleotide sequence ID" value="NC_010001.1"/>
</dbReference>
<dbReference type="SMR" id="A9KLJ9"/>
<dbReference type="STRING" id="357809.Cphy_2382"/>
<dbReference type="KEGG" id="cpy:Cphy_2382"/>
<dbReference type="eggNOG" id="COG0328">
    <property type="taxonomic scope" value="Bacteria"/>
</dbReference>
<dbReference type="HOGENOM" id="CLU_030894_6_2_9"/>
<dbReference type="OrthoDB" id="7845843at2"/>
<dbReference type="Proteomes" id="UP000000370">
    <property type="component" value="Chromosome"/>
</dbReference>
<dbReference type="GO" id="GO:0005737">
    <property type="term" value="C:cytoplasm"/>
    <property type="evidence" value="ECO:0007669"/>
    <property type="project" value="UniProtKB-SubCell"/>
</dbReference>
<dbReference type="GO" id="GO:0000287">
    <property type="term" value="F:magnesium ion binding"/>
    <property type="evidence" value="ECO:0007669"/>
    <property type="project" value="UniProtKB-UniRule"/>
</dbReference>
<dbReference type="GO" id="GO:0003676">
    <property type="term" value="F:nucleic acid binding"/>
    <property type="evidence" value="ECO:0007669"/>
    <property type="project" value="InterPro"/>
</dbReference>
<dbReference type="GO" id="GO:0004523">
    <property type="term" value="F:RNA-DNA hybrid ribonuclease activity"/>
    <property type="evidence" value="ECO:0007669"/>
    <property type="project" value="UniProtKB-UniRule"/>
</dbReference>
<dbReference type="GO" id="GO:0043137">
    <property type="term" value="P:DNA replication, removal of RNA primer"/>
    <property type="evidence" value="ECO:0007669"/>
    <property type="project" value="TreeGrafter"/>
</dbReference>
<dbReference type="CDD" id="cd09278">
    <property type="entry name" value="RNase_HI_prokaryote_like"/>
    <property type="match status" value="1"/>
</dbReference>
<dbReference type="FunFam" id="3.30.420.10:FF:000089">
    <property type="entry name" value="Ribonuclease H"/>
    <property type="match status" value="1"/>
</dbReference>
<dbReference type="Gene3D" id="3.30.420.10">
    <property type="entry name" value="Ribonuclease H-like superfamily/Ribonuclease H"/>
    <property type="match status" value="1"/>
</dbReference>
<dbReference type="HAMAP" id="MF_00042">
    <property type="entry name" value="RNase_H"/>
    <property type="match status" value="1"/>
</dbReference>
<dbReference type="InterPro" id="IPR050092">
    <property type="entry name" value="RNase_H"/>
</dbReference>
<dbReference type="InterPro" id="IPR012337">
    <property type="entry name" value="RNaseH-like_sf"/>
</dbReference>
<dbReference type="InterPro" id="IPR002156">
    <property type="entry name" value="RNaseH_domain"/>
</dbReference>
<dbReference type="InterPro" id="IPR036397">
    <property type="entry name" value="RNaseH_sf"/>
</dbReference>
<dbReference type="InterPro" id="IPR022892">
    <property type="entry name" value="RNaseHI"/>
</dbReference>
<dbReference type="NCBIfam" id="NF001236">
    <property type="entry name" value="PRK00203.1"/>
    <property type="match status" value="1"/>
</dbReference>
<dbReference type="PANTHER" id="PTHR10642">
    <property type="entry name" value="RIBONUCLEASE H1"/>
    <property type="match status" value="1"/>
</dbReference>
<dbReference type="PANTHER" id="PTHR10642:SF26">
    <property type="entry name" value="RIBONUCLEASE H1"/>
    <property type="match status" value="1"/>
</dbReference>
<dbReference type="Pfam" id="PF00075">
    <property type="entry name" value="RNase_H"/>
    <property type="match status" value="1"/>
</dbReference>
<dbReference type="SUPFAM" id="SSF53098">
    <property type="entry name" value="Ribonuclease H-like"/>
    <property type="match status" value="1"/>
</dbReference>
<dbReference type="PROSITE" id="PS50879">
    <property type="entry name" value="RNASE_H_1"/>
    <property type="match status" value="1"/>
</dbReference>
<comment type="function">
    <text evidence="1">Endonuclease that specifically degrades the RNA of RNA-DNA hybrids.</text>
</comment>
<comment type="catalytic activity">
    <reaction evidence="1">
        <text>Endonucleolytic cleavage to 5'-phosphomonoester.</text>
        <dbReference type="EC" id="3.1.26.4"/>
    </reaction>
</comment>
<comment type="cofactor">
    <cofactor evidence="1">
        <name>Mg(2+)</name>
        <dbReference type="ChEBI" id="CHEBI:18420"/>
    </cofactor>
    <text evidence="1">Binds 1 Mg(2+) ion per subunit. May bind a second metal ion at a regulatory site, or after substrate binding.</text>
</comment>
<comment type="subunit">
    <text evidence="1">Monomer.</text>
</comment>
<comment type="subcellular location">
    <subcellularLocation>
        <location evidence="1">Cytoplasm</location>
    </subcellularLocation>
</comment>
<comment type="similarity">
    <text evidence="1">Belongs to the RNase H family.</text>
</comment>
<accession>A9KLJ9</accession>
<protein>
    <recommendedName>
        <fullName evidence="1">Ribonuclease H</fullName>
        <shortName evidence="1">RNase H</shortName>
        <ecNumber evidence="1">3.1.26.4</ecNumber>
    </recommendedName>
</protein>
<gene>
    <name evidence="1" type="primary">rnhA</name>
    <name type="ordered locus">Cphy_2382</name>
</gene>
<reference key="1">
    <citation type="submission" date="2007-11" db="EMBL/GenBank/DDBJ databases">
        <title>Complete genome sequence of Clostridium phytofermentans ISDg.</title>
        <authorList>
            <person name="Leschine S.B."/>
            <person name="Warnick T.A."/>
            <person name="Blanchard J.L."/>
            <person name="Schnell D.J."/>
            <person name="Petit E.L."/>
            <person name="LaTouf W.G."/>
            <person name="Copeland A."/>
            <person name="Lucas S."/>
            <person name="Lapidus A."/>
            <person name="Barry K."/>
            <person name="Glavina del Rio T."/>
            <person name="Dalin E."/>
            <person name="Tice H."/>
            <person name="Pitluck S."/>
            <person name="Kiss H."/>
            <person name="Brettin T."/>
            <person name="Bruce D."/>
            <person name="Detter J.C."/>
            <person name="Han C."/>
            <person name="Kuske C."/>
            <person name="Schmutz J."/>
            <person name="Larimer F."/>
            <person name="Land M."/>
            <person name="Hauser L."/>
            <person name="Kyrpides N."/>
            <person name="Kim E.A."/>
            <person name="Richardson P."/>
        </authorList>
    </citation>
    <scope>NUCLEOTIDE SEQUENCE [LARGE SCALE GENOMIC DNA]</scope>
    <source>
        <strain>ATCC 700394 / DSM 18823 / ISDg</strain>
    </source>
</reference>
<keyword id="KW-0963">Cytoplasm</keyword>
<keyword id="KW-0255">Endonuclease</keyword>
<keyword id="KW-0378">Hydrolase</keyword>
<keyword id="KW-0460">Magnesium</keyword>
<keyword id="KW-0479">Metal-binding</keyword>
<keyword id="KW-0540">Nuclease</keyword>
<keyword id="KW-1185">Reference proteome</keyword>
<organism>
    <name type="scientific">Lachnoclostridium phytofermentans (strain ATCC 700394 / DSM 18823 / ISDg)</name>
    <name type="common">Clostridium phytofermentans</name>
    <dbReference type="NCBI Taxonomy" id="357809"/>
    <lineage>
        <taxon>Bacteria</taxon>
        <taxon>Bacillati</taxon>
        <taxon>Bacillota</taxon>
        <taxon>Clostridia</taxon>
        <taxon>Lachnospirales</taxon>
        <taxon>Lachnospiraceae</taxon>
    </lineage>
</organism>
<evidence type="ECO:0000255" key="1">
    <source>
        <dbReference type="HAMAP-Rule" id="MF_00042"/>
    </source>
</evidence>
<evidence type="ECO:0000255" key="2">
    <source>
        <dbReference type="PROSITE-ProRule" id="PRU00408"/>
    </source>
</evidence>